<proteinExistence type="evidence at protein level"/>
<organism>
    <name type="scientific">Homo sapiens</name>
    <name type="common">Human</name>
    <dbReference type="NCBI Taxonomy" id="9606"/>
    <lineage>
        <taxon>Eukaryota</taxon>
        <taxon>Metazoa</taxon>
        <taxon>Chordata</taxon>
        <taxon>Craniata</taxon>
        <taxon>Vertebrata</taxon>
        <taxon>Euteleostomi</taxon>
        <taxon>Mammalia</taxon>
        <taxon>Eutheria</taxon>
        <taxon>Euarchontoglires</taxon>
        <taxon>Primates</taxon>
        <taxon>Haplorrhini</taxon>
        <taxon>Catarrhini</taxon>
        <taxon>Hominidae</taxon>
        <taxon>Homo</taxon>
    </lineage>
</organism>
<protein>
    <recommendedName>
        <fullName>Unconventional myosin-IXb</fullName>
    </recommendedName>
    <alternativeName>
        <fullName>Unconventional myosin-9b</fullName>
    </alternativeName>
</protein>
<gene>
    <name type="primary">MYO9B</name>
    <name type="synonym">MYR5</name>
</gene>
<feature type="initiator methionine" description="Removed" evidence="24">
    <location>
        <position position="1"/>
    </location>
</feature>
<feature type="chain" id="PRO_0000123469" description="Unconventional myosin-IXb">
    <location>
        <begin position="2"/>
        <end position="2157"/>
    </location>
</feature>
<feature type="domain" description="Ras-associating" evidence="5">
    <location>
        <begin position="15"/>
        <end position="114"/>
    </location>
</feature>
<feature type="domain" description="Myosin motor" evidence="8">
    <location>
        <begin position="146"/>
        <end position="953"/>
    </location>
</feature>
<feature type="domain" description="IQ 1" evidence="4">
    <location>
        <begin position="957"/>
        <end position="977"/>
    </location>
</feature>
<feature type="domain" description="IQ 2" evidence="4">
    <location>
        <begin position="979"/>
        <end position="1000"/>
    </location>
</feature>
<feature type="domain" description="IQ 3" evidence="4">
    <location>
        <begin position="1001"/>
        <end position="1023"/>
    </location>
</feature>
<feature type="domain" description="IQ 4" evidence="4">
    <location>
        <begin position="1024"/>
        <end position="1053"/>
    </location>
</feature>
<feature type="domain" description="Rho-GAP" evidence="6">
    <location>
        <begin position="1703"/>
        <end position="1888"/>
    </location>
</feature>
<feature type="zinc finger region" description="Phorbol-ester/DAG-type" evidence="7">
    <location>
        <begin position="1632"/>
        <end position="1681"/>
    </location>
</feature>
<feature type="region of interest" description="Disordered" evidence="9">
    <location>
        <begin position="709"/>
        <end position="734"/>
    </location>
</feature>
<feature type="region of interest" description="Actin-binding" evidence="14">
    <location>
        <begin position="844"/>
        <end position="855"/>
    </location>
</feature>
<feature type="region of interest" description="Neck or regulatory domain" evidence="14">
    <location>
        <begin position="940"/>
        <end position="1044"/>
    </location>
</feature>
<feature type="region of interest" description="Tail" evidence="14">
    <location>
        <begin position="1045"/>
        <end position="2157"/>
    </location>
</feature>
<feature type="region of interest" description="Disordered" evidence="9">
    <location>
        <begin position="1046"/>
        <end position="1298"/>
    </location>
</feature>
<feature type="region of interest" description="Disordered" evidence="9">
    <location>
        <begin position="1320"/>
        <end position="1410"/>
    </location>
</feature>
<feature type="region of interest" description="Disordered" evidence="9">
    <location>
        <begin position="1455"/>
        <end position="1484"/>
    </location>
</feature>
<feature type="region of interest" description="Interaction with RHOA" evidence="10">
    <location>
        <begin position="1739"/>
        <end position="1744"/>
    </location>
</feature>
<feature type="region of interest" description="Disordered" evidence="9">
    <location>
        <begin position="1980"/>
        <end position="2157"/>
    </location>
</feature>
<feature type="coiled-coil region" evidence="3">
    <location>
        <begin position="1046"/>
        <end position="1071"/>
    </location>
</feature>
<feature type="coiled-coil region" evidence="3">
    <location>
        <begin position="1880"/>
        <end position="1901"/>
    </location>
</feature>
<feature type="coiled-coil region" evidence="3">
    <location>
        <begin position="1959"/>
        <end position="1989"/>
    </location>
</feature>
<feature type="compositionally biased region" description="Basic and acidic residues" evidence="9">
    <location>
        <begin position="1050"/>
        <end position="1063"/>
    </location>
</feature>
<feature type="compositionally biased region" description="Basic and acidic residues" evidence="9">
    <location>
        <begin position="1109"/>
        <end position="1122"/>
    </location>
</feature>
<feature type="compositionally biased region" description="Basic and acidic residues" evidence="9">
    <location>
        <begin position="1136"/>
        <end position="1160"/>
    </location>
</feature>
<feature type="compositionally biased region" description="Basic and acidic residues" evidence="9">
    <location>
        <begin position="1168"/>
        <end position="1183"/>
    </location>
</feature>
<feature type="compositionally biased region" description="Basic and acidic residues" evidence="9">
    <location>
        <begin position="1191"/>
        <end position="1201"/>
    </location>
</feature>
<feature type="compositionally biased region" description="Polar residues" evidence="9">
    <location>
        <begin position="1211"/>
        <end position="1222"/>
    </location>
</feature>
<feature type="compositionally biased region" description="Basic and acidic residues" evidence="9">
    <location>
        <begin position="1467"/>
        <end position="1478"/>
    </location>
</feature>
<feature type="compositionally biased region" description="Basic and acidic residues" evidence="9">
    <location>
        <begin position="1980"/>
        <end position="1993"/>
    </location>
</feature>
<feature type="compositionally biased region" description="Pro residues" evidence="9">
    <location>
        <begin position="2021"/>
        <end position="2037"/>
    </location>
</feature>
<feature type="compositionally biased region" description="Low complexity" evidence="9">
    <location>
        <begin position="2081"/>
        <end position="2093"/>
    </location>
</feature>
<feature type="compositionally biased region" description="Basic and acidic residues" evidence="9">
    <location>
        <begin position="2095"/>
        <end position="2106"/>
    </location>
</feature>
<feature type="binding site" evidence="3">
    <location>
        <begin position="239"/>
        <end position="246"/>
    </location>
    <ligand>
        <name>ATP</name>
        <dbReference type="ChEBI" id="CHEBI:30616"/>
    </ligand>
</feature>
<feature type="site" description="Arginine finger; crucial for GTP hydrolysis by stabilizing the transition state" evidence="6">
    <location>
        <position position="1735"/>
    </location>
</feature>
<feature type="modified residue" description="N-acetylserine" evidence="24">
    <location>
        <position position="2"/>
    </location>
</feature>
<feature type="modified residue" description="Phosphoserine" evidence="17">
    <location>
        <position position="716"/>
    </location>
</feature>
<feature type="modified residue" description="Phosphoserine" evidence="25">
    <location>
        <position position="717"/>
    </location>
</feature>
<feature type="modified residue" description="Phosphoserine" evidence="1">
    <location>
        <position position="1045"/>
    </location>
</feature>
<feature type="modified residue" description="Phosphoserine" evidence="25">
    <location>
        <position position="1114"/>
    </location>
</feature>
<feature type="modified residue" description="Phosphoserine" evidence="25">
    <location>
        <position position="1115"/>
    </location>
</feature>
<feature type="modified residue" description="Phosphoserine" evidence="25">
    <location>
        <position position="1122"/>
    </location>
</feature>
<feature type="modified residue" description="Phosphoserine" evidence="25">
    <location>
        <position position="1242"/>
    </location>
</feature>
<feature type="modified residue" description="Phosphoserine" evidence="1">
    <location>
        <position position="1253"/>
    </location>
</feature>
<feature type="modified residue" description="Phosphoserine" evidence="25 26">
    <location>
        <position position="1261"/>
    </location>
</feature>
<feature type="modified residue" description="Phosphoserine" evidence="16 21 23 25 26">
    <location>
        <position position="1267"/>
    </location>
</feature>
<feature type="modified residue" description="Phosphothreonine" evidence="16 21 23 25 26">
    <location>
        <position position="1271"/>
    </location>
</feature>
<feature type="modified residue" description="Phosphoserine" evidence="16 17 18 19 20 22 23 25 26">
    <location>
        <position position="1290"/>
    </location>
</feature>
<feature type="modified residue" description="Phosphoserine" evidence="22">
    <location>
        <position position="1323"/>
    </location>
</feature>
<feature type="modified residue" description="Phosphoserine" evidence="25">
    <location>
        <position position="1331"/>
    </location>
</feature>
<feature type="modified residue" description="Phosphothreonine" evidence="22 25 26">
    <location>
        <position position="1346"/>
    </location>
</feature>
<feature type="modified residue" description="Phosphoserine" evidence="17 23 25">
    <location>
        <position position="1354"/>
    </location>
</feature>
<feature type="modified residue" description="Phosphoserine" evidence="26">
    <location>
        <position position="1356"/>
    </location>
</feature>
<feature type="modified residue" description="Phosphoserine" evidence="18 25">
    <location>
        <position position="1405"/>
    </location>
</feature>
<feature type="modified residue" description="Phosphoserine" evidence="25">
    <location>
        <position position="1926"/>
    </location>
</feature>
<feature type="modified residue" description="Phosphoserine" evidence="25">
    <location>
        <position position="1972"/>
    </location>
</feature>
<feature type="modified residue" description="Phosphoserine" evidence="17 20 21 23 25">
    <location>
        <position position="1992"/>
    </location>
</feature>
<feature type="modified residue" description="Phosphoserine" evidence="1">
    <location>
        <position position="1999"/>
    </location>
</feature>
<feature type="modified residue" description="Phosphothreonine" evidence="2">
    <location>
        <position position="2005"/>
    </location>
</feature>
<feature type="modified residue" description="Phosphoserine" evidence="25">
    <location>
        <position position="2050"/>
    </location>
</feature>
<feature type="modified residue" description="Phosphoserine" evidence="2">
    <location>
        <position position="2141"/>
    </location>
</feature>
<feature type="splice variant" id="VSP_003361" description="In isoform Short." evidence="13">
    <original>PP</original>
    <variation>QY</variation>
    <location>
        <begin position="2021"/>
        <end position="2022"/>
    </location>
</feature>
<feature type="splice variant" id="VSP_003362" description="In isoform Short." evidence="13">
    <location>
        <begin position="2023"/>
        <end position="2157"/>
    </location>
</feature>
<feature type="mutagenesis site" description="Decreases interaction with RHOA. Strongly decreases stimulation of RHOA GTPase activity." evidence="10">
    <original>A</original>
    <variation>E</variation>
    <variation>N</variation>
    <location>
        <position position="1739"/>
    </location>
</feature>
<feature type="mutagenesis site" description="Decreases interaction with RHOA. Decreases stimulation of RHOA GTPase activity." evidence="10">
    <original>N</original>
    <variation>E</variation>
    <location>
        <position position="1741"/>
    </location>
</feature>
<feature type="mutagenesis site" description="Strongly decreases interaction with RHOA. Strongly decreases stimulation of RHOA GTPase activity." evidence="10">
    <original>R</original>
    <variation>E</variation>
    <location>
        <position position="1742"/>
    </location>
</feature>
<feature type="sequence conflict" description="In Ref. 1; AAC50402." evidence="14" ref="1">
    <original>IS</original>
    <variation>YP</variation>
    <location>
        <begin position="237"/>
        <end position="238"/>
    </location>
</feature>
<feature type="sequence conflict" description="In Ref. 1; AAC50402." evidence="14" ref="1">
    <original>G</original>
    <variation>C</variation>
    <location>
        <position position="276"/>
    </location>
</feature>
<feature type="sequence conflict" description="In Ref. 1; AAC50402." evidence="14" ref="1">
    <original>S</original>
    <variation>A</variation>
    <location>
        <position position="1011"/>
    </location>
</feature>
<feature type="sequence conflict" description="In Ref. 1; AAC50402." evidence="14" ref="1">
    <original>V</original>
    <variation>A</variation>
    <location>
        <position position="1693"/>
    </location>
</feature>
<feature type="sequence conflict" description="In Ref. 4; BAA92132." evidence="14" ref="4">
    <original>L</original>
    <variation>P</variation>
    <location>
        <position position="1946"/>
    </location>
</feature>
<feature type="sequence conflict" description="In Ref. 3; AAC26597." evidence="14" ref="3">
    <original>TVAAPP</original>
    <variation>PWPPLH</variation>
    <location>
        <begin position="2039"/>
        <end position="2044"/>
    </location>
</feature>
<feature type="sequence conflict" description="In Ref. 3; AAC26597." evidence="14" ref="3">
    <original>P</original>
    <variation>L</variation>
    <location>
        <position position="2048"/>
    </location>
</feature>
<feature type="sequence conflict" description="In Ref. 3; AAC26597." evidence="14" ref="3">
    <original>P</original>
    <variation>S</variation>
    <location>
        <position position="2066"/>
    </location>
</feature>
<feature type="sequence conflict" description="In Ref. 3; AAC26597." evidence="14" ref="3">
    <original>NG</original>
    <variation>MAESHS</variation>
    <location>
        <begin position="2156"/>
        <end position="2157"/>
    </location>
</feature>
<feature type="strand" evidence="27">
    <location>
        <begin position="1697"/>
        <end position="1700"/>
    </location>
</feature>
<feature type="helix" evidence="27">
    <location>
        <begin position="1702"/>
        <end position="1705"/>
    </location>
</feature>
<feature type="helix" evidence="27">
    <location>
        <begin position="1714"/>
        <end position="1726"/>
    </location>
</feature>
<feature type="turn" evidence="27">
    <location>
        <begin position="1727"/>
        <end position="1729"/>
    </location>
</feature>
<feature type="turn" evidence="27">
    <location>
        <begin position="1731"/>
        <end position="1735"/>
    </location>
</feature>
<feature type="helix" evidence="27">
    <location>
        <begin position="1740"/>
        <end position="1752"/>
    </location>
</feature>
<feature type="helix" evidence="27">
    <location>
        <begin position="1759"/>
        <end position="1761"/>
    </location>
</feature>
<feature type="helix" evidence="27">
    <location>
        <begin position="1764"/>
        <end position="1776"/>
    </location>
</feature>
<feature type="strand" evidence="27">
    <location>
        <begin position="1778"/>
        <end position="1780"/>
    </location>
</feature>
<feature type="helix" evidence="27">
    <location>
        <begin position="1788"/>
        <end position="1795"/>
    </location>
</feature>
<feature type="strand" evidence="27">
    <location>
        <begin position="1797"/>
        <end position="1799"/>
    </location>
</feature>
<feature type="helix" evidence="27">
    <location>
        <begin position="1800"/>
        <end position="1811"/>
    </location>
</feature>
<feature type="helix" evidence="27">
    <location>
        <begin position="1816"/>
        <end position="1834"/>
    </location>
</feature>
<feature type="helix" evidence="27">
    <location>
        <begin position="1836"/>
        <end position="1839"/>
    </location>
</feature>
<feature type="helix" evidence="27">
    <location>
        <begin position="1843"/>
        <end position="1854"/>
    </location>
</feature>
<feature type="helix" evidence="27">
    <location>
        <begin position="1866"/>
        <end position="1895"/>
    </location>
</feature>
<name>MYO9B_HUMAN</name>
<reference key="1">
    <citation type="journal article" date="1996" name="J. Cell Sci.">
        <title>Human myosin-IXb, an unconventional myosin with a chimerin-like rho/rac GTPase-activating protein domain in its tail.</title>
        <authorList>
            <person name="Wirth J.A."/>
            <person name="Jensen K.A."/>
            <person name="Post P.L."/>
            <person name="Bement W.M."/>
            <person name="Mooseker M.S."/>
        </authorList>
    </citation>
    <scope>NUCLEOTIDE SEQUENCE [MRNA] (ISOFORM LONG/SHORT)</scope>
    <scope>SUBCELLULAR LOCATION</scope>
    <scope>TISSUE SPECIFICITY</scope>
    <source>
        <tissue>Liver</tissue>
        <tissue>Small intestine</tissue>
    </source>
</reference>
<reference key="2">
    <citation type="journal article" date="2004" name="Nature">
        <title>The DNA sequence and biology of human chromosome 19.</title>
        <authorList>
            <person name="Grimwood J."/>
            <person name="Gordon L.A."/>
            <person name="Olsen A.S."/>
            <person name="Terry A."/>
            <person name="Schmutz J."/>
            <person name="Lamerdin J.E."/>
            <person name="Hellsten U."/>
            <person name="Goodstein D."/>
            <person name="Couronne O."/>
            <person name="Tran-Gyamfi M."/>
            <person name="Aerts A."/>
            <person name="Altherr M."/>
            <person name="Ashworth L."/>
            <person name="Bajorek E."/>
            <person name="Black S."/>
            <person name="Branscomb E."/>
            <person name="Caenepeel S."/>
            <person name="Carrano A.V."/>
            <person name="Caoile C."/>
            <person name="Chan Y.M."/>
            <person name="Christensen M."/>
            <person name="Cleland C.A."/>
            <person name="Copeland A."/>
            <person name="Dalin E."/>
            <person name="Dehal P."/>
            <person name="Denys M."/>
            <person name="Detter J.C."/>
            <person name="Escobar J."/>
            <person name="Flowers D."/>
            <person name="Fotopulos D."/>
            <person name="Garcia C."/>
            <person name="Georgescu A.M."/>
            <person name="Glavina T."/>
            <person name="Gomez M."/>
            <person name="Gonzales E."/>
            <person name="Groza M."/>
            <person name="Hammon N."/>
            <person name="Hawkins T."/>
            <person name="Haydu L."/>
            <person name="Ho I."/>
            <person name="Huang W."/>
            <person name="Israni S."/>
            <person name="Jett J."/>
            <person name="Kadner K."/>
            <person name="Kimball H."/>
            <person name="Kobayashi A."/>
            <person name="Larionov V."/>
            <person name="Leem S.-H."/>
            <person name="Lopez F."/>
            <person name="Lou Y."/>
            <person name="Lowry S."/>
            <person name="Malfatti S."/>
            <person name="Martinez D."/>
            <person name="McCready P.M."/>
            <person name="Medina C."/>
            <person name="Morgan J."/>
            <person name="Nelson K."/>
            <person name="Nolan M."/>
            <person name="Ovcharenko I."/>
            <person name="Pitluck S."/>
            <person name="Pollard M."/>
            <person name="Popkie A.P."/>
            <person name="Predki P."/>
            <person name="Quan G."/>
            <person name="Ramirez L."/>
            <person name="Rash S."/>
            <person name="Retterer J."/>
            <person name="Rodriguez A."/>
            <person name="Rogers S."/>
            <person name="Salamov A."/>
            <person name="Salazar A."/>
            <person name="She X."/>
            <person name="Smith D."/>
            <person name="Slezak T."/>
            <person name="Solovyev V."/>
            <person name="Thayer N."/>
            <person name="Tice H."/>
            <person name="Tsai M."/>
            <person name="Ustaszewska A."/>
            <person name="Vo N."/>
            <person name="Wagner M."/>
            <person name="Wheeler J."/>
            <person name="Wu K."/>
            <person name="Xie G."/>
            <person name="Yang J."/>
            <person name="Dubchak I."/>
            <person name="Furey T.S."/>
            <person name="DeJong P."/>
            <person name="Dickson M."/>
            <person name="Gordon D."/>
            <person name="Eichler E.E."/>
            <person name="Pennacchio L.A."/>
            <person name="Richardson P."/>
            <person name="Stubbs L."/>
            <person name="Rokhsar D.S."/>
            <person name="Myers R.M."/>
            <person name="Rubin E.M."/>
            <person name="Lucas S.M."/>
        </authorList>
    </citation>
    <scope>NUCLEOTIDE SEQUENCE [LARGE SCALE GENOMIC DNA]</scope>
</reference>
<reference key="3">
    <citation type="journal article" date="1999" name="Gene">
        <title>Cloning of the murine unconventional myosin gene Myo9b and identification of alternative splicing.</title>
        <authorList>
            <person name="Grewal P.K."/>
            <person name="Jones A.-M."/>
            <person name="Maconochie M."/>
            <person name="Lemmers R.J.F."/>
            <person name="Frants R.R."/>
            <person name="Hewitt J.E."/>
        </authorList>
    </citation>
    <scope>PARTIAL NUCLEOTIDE SEQUENCE [MRNA]</scope>
    <scope>ALTERNATIVE SPLICING</scope>
</reference>
<reference key="4">
    <citation type="journal article" date="1998" name="J. Cell Sci.">
        <title>Human myosin-IXb is a mechanochemically active motor and a GAP for rho.</title>
        <authorList>
            <person name="Post P.L."/>
            <person name="Bokoch G.M."/>
            <person name="Mooseker M.S."/>
        </authorList>
    </citation>
    <scope>NUCLEOTIDE SEQUENCE [MRNA] OF 1940-2157 (ISOFORM LONG)</scope>
    <scope>FUNCTION</scope>
    <scope>SUBCELLULAR LOCATION</scope>
    <scope>TISSUE SPECIFICITY</scope>
</reference>
<reference key="5">
    <citation type="journal article" date="2004" name="Nat. Genet.">
        <title>Complete sequencing and characterization of 21,243 full-length human cDNAs.</title>
        <authorList>
            <person name="Ota T."/>
            <person name="Suzuki Y."/>
            <person name="Nishikawa T."/>
            <person name="Otsuki T."/>
            <person name="Sugiyama T."/>
            <person name="Irie R."/>
            <person name="Wakamatsu A."/>
            <person name="Hayashi K."/>
            <person name="Sato H."/>
            <person name="Nagai K."/>
            <person name="Kimura K."/>
            <person name="Makita H."/>
            <person name="Sekine M."/>
            <person name="Obayashi M."/>
            <person name="Nishi T."/>
            <person name="Shibahara T."/>
            <person name="Tanaka T."/>
            <person name="Ishii S."/>
            <person name="Yamamoto J."/>
            <person name="Saito K."/>
            <person name="Kawai Y."/>
            <person name="Isono Y."/>
            <person name="Nakamura Y."/>
            <person name="Nagahari K."/>
            <person name="Murakami K."/>
            <person name="Yasuda T."/>
            <person name="Iwayanagi T."/>
            <person name="Wagatsuma M."/>
            <person name="Shiratori A."/>
            <person name="Sudo H."/>
            <person name="Hosoiri T."/>
            <person name="Kaku Y."/>
            <person name="Kodaira H."/>
            <person name="Kondo H."/>
            <person name="Sugawara M."/>
            <person name="Takahashi M."/>
            <person name="Kanda K."/>
            <person name="Yokoi T."/>
            <person name="Furuya T."/>
            <person name="Kikkawa E."/>
            <person name="Omura Y."/>
            <person name="Abe K."/>
            <person name="Kamihara K."/>
            <person name="Katsuta N."/>
            <person name="Sato K."/>
            <person name="Tanikawa M."/>
            <person name="Yamazaki M."/>
            <person name="Ninomiya K."/>
            <person name="Ishibashi T."/>
            <person name="Yamashita H."/>
            <person name="Murakawa K."/>
            <person name="Fujimori K."/>
            <person name="Tanai H."/>
            <person name="Kimata M."/>
            <person name="Watanabe M."/>
            <person name="Hiraoka S."/>
            <person name="Chiba Y."/>
            <person name="Ishida S."/>
            <person name="Ono Y."/>
            <person name="Takiguchi S."/>
            <person name="Watanabe S."/>
            <person name="Yosida M."/>
            <person name="Hotuta T."/>
            <person name="Kusano J."/>
            <person name="Kanehori K."/>
            <person name="Takahashi-Fujii A."/>
            <person name="Hara H."/>
            <person name="Tanase T.-O."/>
            <person name="Nomura Y."/>
            <person name="Togiya S."/>
            <person name="Komai F."/>
            <person name="Hara R."/>
            <person name="Takeuchi K."/>
            <person name="Arita M."/>
            <person name="Imose N."/>
            <person name="Musashino K."/>
            <person name="Yuuki H."/>
            <person name="Oshima A."/>
            <person name="Sasaki N."/>
            <person name="Aotsuka S."/>
            <person name="Yoshikawa Y."/>
            <person name="Matsunawa H."/>
            <person name="Ichihara T."/>
            <person name="Shiohata N."/>
            <person name="Sano S."/>
            <person name="Moriya S."/>
            <person name="Momiyama H."/>
            <person name="Satoh N."/>
            <person name="Takami S."/>
            <person name="Terashima Y."/>
            <person name="Suzuki O."/>
            <person name="Nakagawa S."/>
            <person name="Senoh A."/>
            <person name="Mizoguchi H."/>
            <person name="Goto Y."/>
            <person name="Shimizu F."/>
            <person name="Wakebe H."/>
            <person name="Hishigaki H."/>
            <person name="Watanabe T."/>
            <person name="Sugiyama A."/>
            <person name="Takemoto M."/>
            <person name="Kawakami B."/>
            <person name="Yamazaki M."/>
            <person name="Watanabe K."/>
            <person name="Kumagai A."/>
            <person name="Itakura S."/>
            <person name="Fukuzumi Y."/>
            <person name="Fujimori Y."/>
            <person name="Komiyama M."/>
            <person name="Tashiro H."/>
            <person name="Tanigami A."/>
            <person name="Fujiwara T."/>
            <person name="Ono T."/>
            <person name="Yamada K."/>
            <person name="Fujii Y."/>
            <person name="Ozaki K."/>
            <person name="Hirao M."/>
            <person name="Ohmori Y."/>
            <person name="Kawabata A."/>
            <person name="Hikiji T."/>
            <person name="Kobatake N."/>
            <person name="Inagaki H."/>
            <person name="Ikema Y."/>
            <person name="Okamoto S."/>
            <person name="Okitani R."/>
            <person name="Kawakami T."/>
            <person name="Noguchi S."/>
            <person name="Itoh T."/>
            <person name="Shigeta K."/>
            <person name="Senba T."/>
            <person name="Matsumura K."/>
            <person name="Nakajima Y."/>
            <person name="Mizuno T."/>
            <person name="Morinaga M."/>
            <person name="Sasaki M."/>
            <person name="Togashi T."/>
            <person name="Oyama M."/>
            <person name="Hata H."/>
            <person name="Watanabe M."/>
            <person name="Komatsu T."/>
            <person name="Mizushima-Sugano J."/>
            <person name="Satoh T."/>
            <person name="Shirai Y."/>
            <person name="Takahashi Y."/>
            <person name="Nakagawa K."/>
            <person name="Okumura K."/>
            <person name="Nagase T."/>
            <person name="Nomura N."/>
            <person name="Kikuchi H."/>
            <person name="Masuho Y."/>
            <person name="Yamashita R."/>
            <person name="Nakai K."/>
            <person name="Yada T."/>
            <person name="Nakamura Y."/>
            <person name="Ohara O."/>
            <person name="Isogai T."/>
            <person name="Sugano S."/>
        </authorList>
    </citation>
    <scope>NUCLEOTIDE SEQUENCE [LARGE SCALE MRNA] OF 1828-2022 (ISOFORM SHORT)</scope>
    <source>
        <tissue>Placenta</tissue>
    </source>
</reference>
<reference key="6">
    <citation type="journal article" date="2006" name="Nat. Biotechnol.">
        <title>A probability-based approach for high-throughput protein phosphorylation analysis and site localization.</title>
        <authorList>
            <person name="Beausoleil S.A."/>
            <person name="Villen J."/>
            <person name="Gerber S.A."/>
            <person name="Rush J."/>
            <person name="Gygi S.P."/>
        </authorList>
    </citation>
    <scope>IDENTIFICATION BY MASS SPECTROMETRY [LARGE SCALE ANALYSIS]</scope>
    <source>
        <tissue>Cervix carcinoma</tissue>
    </source>
</reference>
<reference key="7">
    <citation type="journal article" date="2008" name="J. Proteome Res.">
        <title>Phosphorylation analysis of primary human T lymphocytes using sequential IMAC and titanium oxide enrichment.</title>
        <authorList>
            <person name="Carrascal M."/>
            <person name="Ovelleiro D."/>
            <person name="Casas V."/>
            <person name="Gay M."/>
            <person name="Abian J."/>
        </authorList>
    </citation>
    <scope>PHOSPHORYLATION [LARGE SCALE ANALYSIS] AT SER-1290</scope>
    <scope>IDENTIFICATION BY MASS SPECTROMETRY [LARGE SCALE ANALYSIS]</scope>
    <source>
        <tissue>T-cell</tissue>
    </source>
</reference>
<reference key="8">
    <citation type="journal article" date="2008" name="J. Proteome Res.">
        <title>Phosphoproteome of resting human platelets.</title>
        <authorList>
            <person name="Zahedi R.P."/>
            <person name="Lewandrowski U."/>
            <person name="Wiesner J."/>
            <person name="Wortelkamp S."/>
            <person name="Moebius J."/>
            <person name="Schuetz C."/>
            <person name="Walter U."/>
            <person name="Gambaryan S."/>
            <person name="Sickmann A."/>
        </authorList>
    </citation>
    <scope>PHOSPHORYLATION [LARGE SCALE ANALYSIS] AT SER-1267; THR-1271 AND SER-1290</scope>
    <scope>IDENTIFICATION BY MASS SPECTROMETRY [LARGE SCALE ANALYSIS]</scope>
    <source>
        <tissue>Platelet</tissue>
    </source>
</reference>
<reference key="9">
    <citation type="journal article" date="2008" name="Mol. Cell">
        <title>Kinase-selective enrichment enables quantitative phosphoproteomics of the kinome across the cell cycle.</title>
        <authorList>
            <person name="Daub H."/>
            <person name="Olsen J.V."/>
            <person name="Bairlein M."/>
            <person name="Gnad F."/>
            <person name="Oppermann F.S."/>
            <person name="Korner R."/>
            <person name="Greff Z."/>
            <person name="Keri G."/>
            <person name="Stemmann O."/>
            <person name="Mann M."/>
        </authorList>
    </citation>
    <scope>PHOSPHORYLATION [LARGE SCALE ANALYSIS] AT SER-1290 AND SER-1405</scope>
    <scope>IDENTIFICATION BY MASS SPECTROMETRY [LARGE SCALE ANALYSIS]</scope>
    <source>
        <tissue>Cervix carcinoma</tissue>
    </source>
</reference>
<reference key="10">
    <citation type="journal article" date="2008" name="Proc. Natl. Acad. Sci. U.S.A.">
        <title>A quantitative atlas of mitotic phosphorylation.</title>
        <authorList>
            <person name="Dephoure N."/>
            <person name="Zhou C."/>
            <person name="Villen J."/>
            <person name="Beausoleil S.A."/>
            <person name="Bakalarski C.E."/>
            <person name="Elledge S.J."/>
            <person name="Gygi S.P."/>
        </authorList>
    </citation>
    <scope>PHOSPHORYLATION [LARGE SCALE ANALYSIS] AT SER-716; SER-1290; SER-1354 AND SER-1992</scope>
    <scope>IDENTIFICATION BY MASS SPECTROMETRY [LARGE SCALE ANALYSIS]</scope>
    <source>
        <tissue>Cervix carcinoma</tissue>
    </source>
</reference>
<reference key="11">
    <citation type="journal article" date="2009" name="Anal. Chem.">
        <title>Lys-N and trypsin cover complementary parts of the phosphoproteome in a refined SCX-based approach.</title>
        <authorList>
            <person name="Gauci S."/>
            <person name="Helbig A.O."/>
            <person name="Slijper M."/>
            <person name="Krijgsveld J."/>
            <person name="Heck A.J."/>
            <person name="Mohammed S."/>
        </authorList>
    </citation>
    <scope>IDENTIFICATION BY MASS SPECTROMETRY [LARGE SCALE ANALYSIS]</scope>
</reference>
<reference key="12">
    <citation type="journal article" date="2009" name="Mol. Cell. Proteomics">
        <title>Large-scale proteomics analysis of the human kinome.</title>
        <authorList>
            <person name="Oppermann F.S."/>
            <person name="Gnad F."/>
            <person name="Olsen J.V."/>
            <person name="Hornberger R."/>
            <person name="Greff Z."/>
            <person name="Keri G."/>
            <person name="Mann M."/>
            <person name="Daub H."/>
        </authorList>
    </citation>
    <scope>PHOSPHORYLATION [LARGE SCALE ANALYSIS] AT SER-1290 AND SER-1992</scope>
    <scope>IDENTIFICATION BY MASS SPECTROMETRY [LARGE SCALE ANALYSIS]</scope>
</reference>
<reference key="13">
    <citation type="journal article" date="2009" name="Sci. Signal.">
        <title>Quantitative phosphoproteomic analysis of T cell receptor signaling reveals system-wide modulation of protein-protein interactions.</title>
        <authorList>
            <person name="Mayya V."/>
            <person name="Lundgren D.H."/>
            <person name="Hwang S.-I."/>
            <person name="Rezaul K."/>
            <person name="Wu L."/>
            <person name="Eng J.K."/>
            <person name="Rodionov V."/>
            <person name="Han D.K."/>
        </authorList>
    </citation>
    <scope>PHOSPHORYLATION [LARGE SCALE ANALYSIS] AT SER-1267; THR-1271 AND SER-1992</scope>
    <scope>IDENTIFICATION BY MASS SPECTROMETRY [LARGE SCALE ANALYSIS]</scope>
    <source>
        <tissue>Leukemic T-cell</tissue>
    </source>
</reference>
<reference key="14">
    <citation type="journal article" date="2010" name="Sci. Signal.">
        <title>Quantitative phosphoproteomics reveals widespread full phosphorylation site occupancy during mitosis.</title>
        <authorList>
            <person name="Olsen J.V."/>
            <person name="Vermeulen M."/>
            <person name="Santamaria A."/>
            <person name="Kumar C."/>
            <person name="Miller M.L."/>
            <person name="Jensen L.J."/>
            <person name="Gnad F."/>
            <person name="Cox J."/>
            <person name="Jensen T.S."/>
            <person name="Nigg E.A."/>
            <person name="Brunak S."/>
            <person name="Mann M."/>
        </authorList>
    </citation>
    <scope>PHOSPHORYLATION [LARGE SCALE ANALYSIS] AT SER-1290; SER-1323 AND THR-1346</scope>
    <scope>IDENTIFICATION BY MASS SPECTROMETRY [LARGE SCALE ANALYSIS]</scope>
    <source>
        <tissue>Cervix carcinoma</tissue>
    </source>
</reference>
<reference key="15">
    <citation type="journal article" date="2011" name="BMC Syst. Biol.">
        <title>Initial characterization of the human central proteome.</title>
        <authorList>
            <person name="Burkard T.R."/>
            <person name="Planyavsky M."/>
            <person name="Kaupe I."/>
            <person name="Breitwieser F.P."/>
            <person name="Buerckstuemmer T."/>
            <person name="Bennett K.L."/>
            <person name="Superti-Furga G."/>
            <person name="Colinge J."/>
        </authorList>
    </citation>
    <scope>IDENTIFICATION BY MASS SPECTROMETRY [LARGE SCALE ANALYSIS]</scope>
</reference>
<reference key="16">
    <citation type="journal article" date="2011" name="Sci. Signal.">
        <title>System-wide temporal characterization of the proteome and phosphoproteome of human embryonic stem cell differentiation.</title>
        <authorList>
            <person name="Rigbolt K.T."/>
            <person name="Prokhorova T.A."/>
            <person name="Akimov V."/>
            <person name="Henningsen J."/>
            <person name="Johansen P.T."/>
            <person name="Kratchmarova I."/>
            <person name="Kassem M."/>
            <person name="Mann M."/>
            <person name="Olsen J.V."/>
            <person name="Blagoev B."/>
        </authorList>
    </citation>
    <scope>PHOSPHORYLATION [LARGE SCALE ANALYSIS] AT SER-1267; THR-1271; SER-1290; SER-1354 AND SER-1992</scope>
    <scope>IDENTIFICATION BY MASS SPECTROMETRY [LARGE SCALE ANALYSIS]</scope>
</reference>
<reference key="17">
    <citation type="journal article" date="2012" name="Proc. Natl. Acad. Sci. U.S.A.">
        <title>N-terminal acetylome analyses and functional insights of the N-terminal acetyltransferase NatB.</title>
        <authorList>
            <person name="Van Damme P."/>
            <person name="Lasa M."/>
            <person name="Polevoda B."/>
            <person name="Gazquez C."/>
            <person name="Elosegui-Artola A."/>
            <person name="Kim D.S."/>
            <person name="De Juan-Pardo E."/>
            <person name="Demeyer K."/>
            <person name="Hole K."/>
            <person name="Larrea E."/>
            <person name="Timmerman E."/>
            <person name="Prieto J."/>
            <person name="Arnesen T."/>
            <person name="Sherman F."/>
            <person name="Gevaert K."/>
            <person name="Aldabe R."/>
        </authorList>
    </citation>
    <scope>ACETYLATION [LARGE SCALE ANALYSIS] AT SER-2</scope>
    <scope>CLEAVAGE OF INITIATOR METHIONINE [LARGE SCALE ANALYSIS]</scope>
    <scope>IDENTIFICATION BY MASS SPECTROMETRY [LARGE SCALE ANALYSIS]</scope>
</reference>
<reference key="18">
    <citation type="journal article" date="2013" name="J. Proteome Res.">
        <title>Toward a comprehensive characterization of a human cancer cell phosphoproteome.</title>
        <authorList>
            <person name="Zhou H."/>
            <person name="Di Palma S."/>
            <person name="Preisinger C."/>
            <person name="Peng M."/>
            <person name="Polat A.N."/>
            <person name="Heck A.J."/>
            <person name="Mohammed S."/>
        </authorList>
    </citation>
    <scope>PHOSPHORYLATION [LARGE SCALE ANALYSIS] AT SER-717; SER-1114; SER-1115; SER-1122; SER-1242; SER-1261; SER-1267; THR-1271; SER-1290; SER-1331; THR-1346; SER-1354; SER-1405; SER-1926; SER-1972; SER-1992 AND SER-2050</scope>
    <scope>IDENTIFICATION BY MASS SPECTROMETRY [LARGE SCALE ANALYSIS]</scope>
    <source>
        <tissue>Cervix carcinoma</tissue>
        <tissue>Erythroleukemia</tissue>
    </source>
</reference>
<reference key="19">
    <citation type="journal article" date="2014" name="J. Proteomics">
        <title>An enzyme assisted RP-RPLC approach for in-depth analysis of human liver phosphoproteome.</title>
        <authorList>
            <person name="Bian Y."/>
            <person name="Song C."/>
            <person name="Cheng K."/>
            <person name="Dong M."/>
            <person name="Wang F."/>
            <person name="Huang J."/>
            <person name="Sun D."/>
            <person name="Wang L."/>
            <person name="Ye M."/>
            <person name="Zou H."/>
        </authorList>
    </citation>
    <scope>PHOSPHORYLATION [LARGE SCALE ANALYSIS] AT SER-1261; SER-1267; THR-1271; SER-1290; THR-1346 AND SER-1356</scope>
    <scope>IDENTIFICATION BY MASS SPECTROMETRY [LARGE SCALE ANALYSIS]</scope>
    <source>
        <tissue>Liver</tissue>
    </source>
</reference>
<reference evidence="15" key="20">
    <citation type="journal article" date="2015" name="J. Clin. Invest.">
        <title>Myo9b is a key player in SLIT/ROBO-mediated lung tumor suppression.</title>
        <authorList>
            <person name="Kong R."/>
            <person name="Yi F."/>
            <person name="Wen P."/>
            <person name="Liu J."/>
            <person name="Chen X."/>
            <person name="Ren J."/>
            <person name="Li X."/>
            <person name="Shang Y."/>
            <person name="Nie Y."/>
            <person name="Wu K."/>
            <person name="Fan D."/>
            <person name="Zhu L."/>
            <person name="Feng W."/>
            <person name="Wu J.Y."/>
        </authorList>
    </citation>
    <scope>X-RAY CRYSTALLOGRAPHY (2.20 ANGSTROMS) OF 1691-1916</scope>
    <scope>FUNCTION</scope>
    <scope>INTERACTION WITH ROBO1 AND RHOA</scope>
    <scope>MUTAGENESIS OF ALA-1739; ASN-1741 AND ARG-1742</scope>
</reference>
<sequence length="2157" mass="243401">MSVKEAGSSGRREQAAYHLHIYPQLSTTESQASCRVTATKDSTTSDVIKDAIASLRLDGTKCYVLVEVKESGGEEWVLDANDSPVHRVLLWPRRAQDEHPQEDGYYFLLQERNADGTIKYVHMQLVAQATATRRLVERGLLPRQQADFDDLCNLPELTEGNLLKNLKHRFLQQKIYTYAGSILVAINPFKFLPIYNPKYVKMYENQQLGKLEPHVFALADVAYYTMLRKRVNQCIVISGESGSGKTQSTNFLIHCLTALSQKGYASGVERTILGAGPVLEAFGNAKTAHNNNSSRFGKFIQVSYLESGIVRGAVVEKYLLEKSRLVSQEKDERNYHVFYYLLLGVSEEERQEFQLKQPEDYFYLNQHNLKIEDGEDLKHDFERLKQAMEMVGFLPATKKQIFAVLSAILYLGNVTYKKRATGREEGLEVGPPEVLDTLSQLLKVKREILVEVLTKRKTVTVNDKLILPYSLSEAITARDSMAKSLYSALFDWIVLRINHALLNKKDVEEAVSCLSIGVLDIFGFEDFERNSFEQFCINYANEQLQYYFNQHIFKLEQEEYQGEGITWHNIGYTDNVGCIHLISKKPTGLFYLLDEESNFPHATSQTLLAKFKQQHEDNKYFLGTPVMEPAFIIQHFAGKVKYQIKDFREKNMDYMRPDIVALLRGSDSSYVRELIGMDPVAVFRWAVLRAAIRAMAVLREAGRLRAERAEKAAGMSSPGAQSHPEELPRGASTPSEKLYRDLHNQMIKSIKGLPWQGEDPRSLLQSLSRLQKPRAFILKSKGIKQKQIIPKNLLDSKSLKLIISMTLHDRTTKSLLHLHKKKKPPSISAQFQTSLNKLLEALGKAEPFFIRCIRSNAEKKELCFDDELVLQQLRYTGMLETVRIRRSGYSAKYTFQDFTEQFQVLLPKDAQPCREVISTLLEKMKIDKRNYQIGKTKVFLKETERQALQETLHREVVRKILLLQSWFRMVLERRHFLQMKRAAVTIQACWRSYRVRRALERTQAAVYLQASWRGYWQRKLYRHQKQSIIRLQSLCRGHLQRKSFSQMISEKQKAEEKEREALEAARAGAEEGGQGQAAGGQQVAEQGPEPAEDGGHLASEPEVQPSDRSPLEHSSPEKEAPSPEKTLPPQKTVAAESHEKVPSSREKRESRRQRGLEHVKFQNKHIQSCKEESALREPSRRVTQEQGVSLLEDKKESREDETLLVVETEAENTSQKQPTEQPQAMAVGKVSEETEKTLPSGSPRPGQLERPTSLALDSRVSPPAPGSAPETPEDKSKPCGSPRVQEKPDSPGGSTQIQRYLDAERLASAVELWRGKKLVAAASPSAMLSQSLDLSDRHRATGAALTPTEERRTSFSTSDVSKLLPSLAKAQPAAETTDGERSAKKPAVQKKKPGDASSLPDAGLSPGSQVDSKSTFKRLFLHKTKDKKYSLEGAEELENAVSGHVVLEATTMKKGLEAPSGQQHRHAAGEKRTKEPGGKGKKNRNVKIGKITVSEKWRESVFRQITNANELKYLDEFLLNKINDLRSQKTPIESLFIEATEKFRSNIKTMYSVPNGKIHVGYKDLMENYQIVVSNLATERGQKDTNLVLNLFQSLLDEFTRGYTKNDFEPVKQSKAQKKKRKQERAVQEHNGHVFASYQVSIPQSCEQCLSYIWLMDKALLCSVCKMTCHKKCVHKIQSHCSYTYGRKGEPGVEPGHFGVCVDSLTSDKASVPIVLEKLLEHVEMHGLYTEGLYRKSGAANRTRELRQALQTDPAAVKLENFPIHAITGVLKQWLRELPEPLMTFAQYGDFLRAVELPEKQEQLAAIYAVLEHLPEANHNSLERLIFHLVKVALLEDVNRMSPGALAIIFAPCLLRCPDNSDPLTSMKDVLKITTCVEMLIKEQMRKYKVKMEEISQLEAAESIAFRRLSLLRQNAPWPLKLGFSSPYEGVLNKSPKTRDIQEEELEVLLEEEAAGGDEDREKEILIERIQSIKEEKEDITYRLPELDPRGSDEENLDSETSASTESLLEERAGRGASEGPPAPALPCPGAPTPSPLPTVAAPPRRRPSSFVTVRVKTPRRTPIMPTANIKLPPGLPSHLPRWAPGAREAAAPVRRREPPARRPDQIHSVYITPGADLPVQGALEPLEEDGQPPGAKRRYSDPPTYCLPPASGQTNG</sequence>
<dbReference type="EMBL" id="U42391">
    <property type="protein sequence ID" value="AAC50402.1"/>
    <property type="status" value="ALT_SEQ"/>
    <property type="molecule type" value="mRNA"/>
</dbReference>
<dbReference type="EMBL" id="AC020913">
    <property type="status" value="NOT_ANNOTATED_CDS"/>
    <property type="molecule type" value="Genomic_DNA"/>
</dbReference>
<dbReference type="EMBL" id="AC020908">
    <property type="status" value="NOT_ANNOTATED_CDS"/>
    <property type="molecule type" value="Genomic_DNA"/>
</dbReference>
<dbReference type="EMBL" id="AF143684">
    <property type="protein sequence ID" value="AAF00119.1"/>
    <property type="molecule type" value="mRNA"/>
</dbReference>
<dbReference type="EMBL" id="AF020267">
    <property type="protein sequence ID" value="AAC26597.1"/>
    <property type="molecule type" value="mRNA"/>
</dbReference>
<dbReference type="EMBL" id="AK002201">
    <property type="protein sequence ID" value="BAA92132.1"/>
    <property type="status" value="ALT_INIT"/>
    <property type="molecule type" value="mRNA"/>
</dbReference>
<dbReference type="CCDS" id="CCDS46010.1">
    <molecule id="Q13459-2"/>
</dbReference>
<dbReference type="CCDS" id="CCDS92551.1">
    <molecule id="Q13459-1"/>
</dbReference>
<dbReference type="RefSeq" id="NP_001123537.1">
    <molecule id="Q13459-2"/>
    <property type="nucleotide sequence ID" value="NM_001130065.2"/>
</dbReference>
<dbReference type="RefSeq" id="NP_004136.2">
    <molecule id="Q13459-1"/>
    <property type="nucleotide sequence ID" value="NM_004145.3"/>
</dbReference>
<dbReference type="PDB" id="5C5S">
    <property type="method" value="X-ray"/>
    <property type="resolution" value="2.20 A"/>
    <property type="chains" value="A/B/C/D=1691-1916"/>
</dbReference>
<dbReference type="PDB" id="5HPY">
    <property type="method" value="X-ray"/>
    <property type="resolution" value="2.40 A"/>
    <property type="chains" value="A/D=1691-1916"/>
</dbReference>
<dbReference type="PDBsum" id="5C5S"/>
<dbReference type="PDBsum" id="5HPY"/>
<dbReference type="SMR" id="Q13459"/>
<dbReference type="BioGRID" id="110734">
    <property type="interactions" value="151"/>
</dbReference>
<dbReference type="ELM" id="Q13459"/>
<dbReference type="FunCoup" id="Q13459">
    <property type="interactions" value="1158"/>
</dbReference>
<dbReference type="IntAct" id="Q13459">
    <property type="interactions" value="67"/>
</dbReference>
<dbReference type="MINT" id="Q13459"/>
<dbReference type="STRING" id="9606.ENSP00000471457"/>
<dbReference type="GlyGen" id="Q13459">
    <property type="glycosylation" value="3 sites, 1 O-linked glycan (1 site)"/>
</dbReference>
<dbReference type="iPTMnet" id="Q13459"/>
<dbReference type="MetOSite" id="Q13459"/>
<dbReference type="PhosphoSitePlus" id="Q13459"/>
<dbReference type="SwissPalm" id="Q13459"/>
<dbReference type="BioMuta" id="MYO9B"/>
<dbReference type="DMDM" id="325511388"/>
<dbReference type="CPTAC" id="CPTAC-981"/>
<dbReference type="CPTAC" id="CPTAC-982"/>
<dbReference type="jPOST" id="Q13459"/>
<dbReference type="MassIVE" id="Q13459"/>
<dbReference type="PaxDb" id="9606-ENSP00000471457"/>
<dbReference type="PeptideAtlas" id="Q13459"/>
<dbReference type="ProteomicsDB" id="59458">
    <molecule id="Q13459-1"/>
</dbReference>
<dbReference type="ProteomicsDB" id="59459">
    <molecule id="Q13459-2"/>
</dbReference>
<dbReference type="Pumba" id="Q13459"/>
<dbReference type="Antibodypedia" id="7715">
    <property type="antibodies" value="129 antibodies from 31 providers"/>
</dbReference>
<dbReference type="DNASU" id="4650"/>
<dbReference type="Ensembl" id="ENST00000397274.6">
    <molecule id="Q13459-2"/>
    <property type="protein sequence ID" value="ENSP00000380444.2"/>
    <property type="gene ID" value="ENSG00000099331.14"/>
</dbReference>
<dbReference type="Ensembl" id="ENST00000595618.5">
    <molecule id="Q13459-2"/>
    <property type="protein sequence ID" value="ENSP00000471457.1"/>
    <property type="gene ID" value="ENSG00000099331.14"/>
</dbReference>
<dbReference type="Ensembl" id="ENST00000682292.1">
    <molecule id="Q13459-1"/>
    <property type="protein sequence ID" value="ENSP00000507803.1"/>
    <property type="gene ID" value="ENSG00000099331.14"/>
</dbReference>
<dbReference type="GeneID" id="4650"/>
<dbReference type="KEGG" id="hsa:4650"/>
<dbReference type="MANE-Select" id="ENST00000682292.1">
    <property type="protein sequence ID" value="ENSP00000507803.1"/>
    <property type="RefSeq nucleotide sequence ID" value="NM_004145.4"/>
    <property type="RefSeq protein sequence ID" value="NP_004136.2"/>
</dbReference>
<dbReference type="UCSC" id="uc002nfi.3">
    <molecule id="Q13459-1"/>
    <property type="organism name" value="human"/>
</dbReference>
<dbReference type="AGR" id="HGNC:7609"/>
<dbReference type="CTD" id="4650"/>
<dbReference type="DisGeNET" id="4650"/>
<dbReference type="GeneCards" id="MYO9B"/>
<dbReference type="HGNC" id="HGNC:7609">
    <property type="gene designation" value="MYO9B"/>
</dbReference>
<dbReference type="HPA" id="ENSG00000099331">
    <property type="expression patterns" value="Tissue enhanced (lymphoid)"/>
</dbReference>
<dbReference type="MalaCards" id="MYO9B"/>
<dbReference type="MIM" id="602129">
    <property type="type" value="gene"/>
</dbReference>
<dbReference type="neXtProt" id="NX_Q13459"/>
<dbReference type="OpenTargets" id="ENSG00000099331"/>
<dbReference type="VEuPathDB" id="HostDB:ENSG00000099331"/>
<dbReference type="eggNOG" id="KOG1453">
    <property type="taxonomic scope" value="Eukaryota"/>
</dbReference>
<dbReference type="eggNOG" id="KOG4229">
    <property type="taxonomic scope" value="Eukaryota"/>
</dbReference>
<dbReference type="GeneTree" id="ENSGT00940000156845"/>
<dbReference type="HOGENOM" id="CLU_000192_2_2_1"/>
<dbReference type="InParanoid" id="Q13459"/>
<dbReference type="OrthoDB" id="312459at2759"/>
<dbReference type="PAN-GO" id="Q13459">
    <property type="GO annotations" value="9 GO annotations based on evolutionary models"/>
</dbReference>
<dbReference type="PhylomeDB" id="Q13459"/>
<dbReference type="TreeFam" id="TF319651"/>
<dbReference type="PathwayCommons" id="Q13459"/>
<dbReference type="Reactome" id="R-HSA-2029482">
    <property type="pathway name" value="Regulation of actin dynamics for phagocytic cup formation"/>
</dbReference>
<dbReference type="Reactome" id="R-HSA-8980692">
    <property type="pathway name" value="RHOA GTPase cycle"/>
</dbReference>
<dbReference type="Reactome" id="R-HSA-8985586">
    <property type="pathway name" value="SLIT2:ROBO1 increases RHOA activity"/>
</dbReference>
<dbReference type="Reactome" id="R-HSA-9013026">
    <property type="pathway name" value="RHOB GTPase cycle"/>
</dbReference>
<dbReference type="Reactome" id="R-HSA-9013106">
    <property type="pathway name" value="RHOC GTPase cycle"/>
</dbReference>
<dbReference type="Reactome" id="R-HSA-9013148">
    <property type="pathway name" value="CDC42 GTPase cycle"/>
</dbReference>
<dbReference type="Reactome" id="R-HSA-9013149">
    <property type="pathway name" value="RAC1 GTPase cycle"/>
</dbReference>
<dbReference type="Reactome" id="R-HSA-9035034">
    <property type="pathway name" value="RHOF GTPase cycle"/>
</dbReference>
<dbReference type="Reactome" id="R-HSA-9664422">
    <property type="pathway name" value="FCGR3A-mediated phagocytosis"/>
</dbReference>
<dbReference type="SignaLink" id="Q13459"/>
<dbReference type="SIGNOR" id="Q13459"/>
<dbReference type="BioGRID-ORCS" id="4650">
    <property type="hits" value="48 hits in 1172 CRISPR screens"/>
</dbReference>
<dbReference type="ChiTaRS" id="MYO9B">
    <property type="organism name" value="human"/>
</dbReference>
<dbReference type="EvolutionaryTrace" id="Q13459"/>
<dbReference type="GeneWiki" id="MYO9B"/>
<dbReference type="GenomeRNAi" id="4650"/>
<dbReference type="Pharos" id="Q13459">
    <property type="development level" value="Tbio"/>
</dbReference>
<dbReference type="PRO" id="PR:Q13459"/>
<dbReference type="Proteomes" id="UP000005640">
    <property type="component" value="Chromosome 19"/>
</dbReference>
<dbReference type="RNAct" id="Q13459">
    <property type="molecule type" value="protein"/>
</dbReference>
<dbReference type="Bgee" id="ENSG00000099331">
    <property type="expression patterns" value="Expressed in granulocyte and 173 other cell types or tissues"/>
</dbReference>
<dbReference type="ExpressionAtlas" id="Q13459">
    <property type="expression patterns" value="baseline and differential"/>
</dbReference>
<dbReference type="GO" id="GO:0015629">
    <property type="term" value="C:actin cytoskeleton"/>
    <property type="evidence" value="ECO:0000304"/>
    <property type="project" value="ProtInc"/>
</dbReference>
<dbReference type="GO" id="GO:0005884">
    <property type="term" value="C:actin filament"/>
    <property type="evidence" value="ECO:0000314"/>
    <property type="project" value="UniProtKB"/>
</dbReference>
<dbReference type="GO" id="GO:0005938">
    <property type="term" value="C:cell cortex"/>
    <property type="evidence" value="ECO:0000314"/>
    <property type="project" value="UniProtKB"/>
</dbReference>
<dbReference type="GO" id="GO:0005737">
    <property type="term" value="C:cytoplasm"/>
    <property type="evidence" value="ECO:0000314"/>
    <property type="project" value="UniProtKB"/>
</dbReference>
<dbReference type="GO" id="GO:0005829">
    <property type="term" value="C:cytosol"/>
    <property type="evidence" value="ECO:0000314"/>
    <property type="project" value="HPA"/>
</dbReference>
<dbReference type="GO" id="GO:0030027">
    <property type="term" value="C:lamellipodium"/>
    <property type="evidence" value="ECO:0000318"/>
    <property type="project" value="GO_Central"/>
</dbReference>
<dbReference type="GO" id="GO:0016020">
    <property type="term" value="C:membrane"/>
    <property type="evidence" value="ECO:0007005"/>
    <property type="project" value="UniProtKB"/>
</dbReference>
<dbReference type="GO" id="GO:0016459">
    <property type="term" value="C:myosin complex"/>
    <property type="evidence" value="ECO:0007669"/>
    <property type="project" value="UniProtKB-KW"/>
</dbReference>
<dbReference type="GO" id="GO:0048471">
    <property type="term" value="C:perinuclear region of cytoplasm"/>
    <property type="evidence" value="ECO:0000314"/>
    <property type="project" value="UniProtKB"/>
</dbReference>
<dbReference type="GO" id="GO:0098871">
    <property type="term" value="C:postsynaptic actin cytoskeleton"/>
    <property type="evidence" value="ECO:0000314"/>
    <property type="project" value="SynGO"/>
</dbReference>
<dbReference type="GO" id="GO:0001726">
    <property type="term" value="C:ruffle"/>
    <property type="evidence" value="ECO:0000318"/>
    <property type="project" value="GO_Central"/>
</dbReference>
<dbReference type="GO" id="GO:0003779">
    <property type="term" value="F:actin binding"/>
    <property type="evidence" value="ECO:0000314"/>
    <property type="project" value="UniProtKB"/>
</dbReference>
<dbReference type="GO" id="GO:0051015">
    <property type="term" value="F:actin filament binding"/>
    <property type="evidence" value="ECO:0000318"/>
    <property type="project" value="GO_Central"/>
</dbReference>
<dbReference type="GO" id="GO:0043531">
    <property type="term" value="F:ADP binding"/>
    <property type="evidence" value="ECO:0000314"/>
    <property type="project" value="UniProtKB"/>
</dbReference>
<dbReference type="GO" id="GO:0005524">
    <property type="term" value="F:ATP binding"/>
    <property type="evidence" value="ECO:0000314"/>
    <property type="project" value="UniProtKB"/>
</dbReference>
<dbReference type="GO" id="GO:0016887">
    <property type="term" value="F:ATP hydrolysis activity"/>
    <property type="evidence" value="ECO:0000318"/>
    <property type="project" value="GO_Central"/>
</dbReference>
<dbReference type="GO" id="GO:0005516">
    <property type="term" value="F:calmodulin binding"/>
    <property type="evidence" value="ECO:0000314"/>
    <property type="project" value="UniProtKB"/>
</dbReference>
<dbReference type="GO" id="GO:0005096">
    <property type="term" value="F:GTPase activator activity"/>
    <property type="evidence" value="ECO:0000314"/>
    <property type="project" value="UniProtKB"/>
</dbReference>
<dbReference type="GO" id="GO:0000146">
    <property type="term" value="F:microfilament motor activity"/>
    <property type="evidence" value="ECO:0000314"/>
    <property type="project" value="UniProtKB"/>
</dbReference>
<dbReference type="GO" id="GO:0048495">
    <property type="term" value="F:Roundabout binding"/>
    <property type="evidence" value="ECO:0000353"/>
    <property type="project" value="UniProtKB"/>
</dbReference>
<dbReference type="GO" id="GO:0031267">
    <property type="term" value="F:small GTPase binding"/>
    <property type="evidence" value="ECO:0000353"/>
    <property type="project" value="UniProtKB"/>
</dbReference>
<dbReference type="GO" id="GO:0008270">
    <property type="term" value="F:zinc ion binding"/>
    <property type="evidence" value="ECO:0007669"/>
    <property type="project" value="UniProtKB-KW"/>
</dbReference>
<dbReference type="GO" id="GO:0030048">
    <property type="term" value="P:actin filament-based movement"/>
    <property type="evidence" value="ECO:0000314"/>
    <property type="project" value="UniProtKB"/>
</dbReference>
<dbReference type="GO" id="GO:0072673">
    <property type="term" value="P:lamellipodium morphogenesis"/>
    <property type="evidence" value="ECO:0000318"/>
    <property type="project" value="GO_Central"/>
</dbReference>
<dbReference type="GO" id="GO:0035023">
    <property type="term" value="P:regulation of Rho protein signal transduction"/>
    <property type="evidence" value="ECO:0000315"/>
    <property type="project" value="UniProtKB"/>
</dbReference>
<dbReference type="GO" id="GO:0051056">
    <property type="term" value="P:regulation of small GTPase mediated signal transduction"/>
    <property type="evidence" value="ECO:0000304"/>
    <property type="project" value="Reactome"/>
</dbReference>
<dbReference type="GO" id="GO:0007266">
    <property type="term" value="P:Rho protein signal transduction"/>
    <property type="evidence" value="ECO:0000305"/>
    <property type="project" value="UniProtKB"/>
</dbReference>
<dbReference type="GO" id="GO:0035385">
    <property type="term" value="P:Roundabout signaling pathway"/>
    <property type="evidence" value="ECO:0000314"/>
    <property type="project" value="UniProtKB"/>
</dbReference>
<dbReference type="CDD" id="cd20884">
    <property type="entry name" value="C1_Myosin-IXb"/>
    <property type="match status" value="1"/>
</dbReference>
<dbReference type="CDD" id="cd23767">
    <property type="entry name" value="IQCD"/>
    <property type="match status" value="1"/>
</dbReference>
<dbReference type="CDD" id="cd01385">
    <property type="entry name" value="MYSc_Myo9"/>
    <property type="match status" value="1"/>
</dbReference>
<dbReference type="CDD" id="cd17217">
    <property type="entry name" value="RA_Myosin-IXb"/>
    <property type="match status" value="1"/>
</dbReference>
<dbReference type="CDD" id="cd04407">
    <property type="entry name" value="RhoGAP_myosin_IXB"/>
    <property type="match status" value="1"/>
</dbReference>
<dbReference type="FunFam" id="1.20.120.720:FF:000003">
    <property type="entry name" value="Putative unconventional myosin-IXa"/>
    <property type="match status" value="1"/>
</dbReference>
<dbReference type="FunFam" id="3.30.60.20:FF:000020">
    <property type="entry name" value="Putative unconventional myosin-IXa"/>
    <property type="match status" value="1"/>
</dbReference>
<dbReference type="FunFam" id="3.40.850.10:FF:000008">
    <property type="entry name" value="Putative unconventional myosin-IXa"/>
    <property type="match status" value="1"/>
</dbReference>
<dbReference type="FunFam" id="1.10.10.820:FF:000003">
    <property type="entry name" value="unconventional myosin-IXa isoform X1"/>
    <property type="match status" value="1"/>
</dbReference>
<dbReference type="FunFam" id="1.10.555.10:FF:000009">
    <property type="entry name" value="unconventional myosin-IXa isoform X1"/>
    <property type="match status" value="1"/>
</dbReference>
<dbReference type="FunFam" id="1.20.58.530:FF:000005">
    <property type="entry name" value="unconventional myosin-IXa isoform X1"/>
    <property type="match status" value="1"/>
</dbReference>
<dbReference type="FunFam" id="3.40.850.10:FF:000013">
    <property type="entry name" value="unconventional myosin-IXa isoform X1"/>
    <property type="match status" value="1"/>
</dbReference>
<dbReference type="FunFam" id="1.20.5.190:FF:000013">
    <property type="entry name" value="unconventional myosin-IXa isoform X2"/>
    <property type="match status" value="1"/>
</dbReference>
<dbReference type="FunFam" id="1.20.58.530:FF:000009">
    <property type="entry name" value="unconventional myosin-IXb isoform X1"/>
    <property type="match status" value="1"/>
</dbReference>
<dbReference type="Gene3D" id="1.10.10.820">
    <property type="match status" value="1"/>
</dbReference>
<dbReference type="Gene3D" id="1.20.5.190">
    <property type="match status" value="2"/>
</dbReference>
<dbReference type="Gene3D" id="1.20.58.530">
    <property type="match status" value="2"/>
</dbReference>
<dbReference type="Gene3D" id="3.30.60.20">
    <property type="match status" value="1"/>
</dbReference>
<dbReference type="Gene3D" id="6.20.240.20">
    <property type="match status" value="1"/>
</dbReference>
<dbReference type="Gene3D" id="3.40.850.10">
    <property type="entry name" value="Kinesin motor domain"/>
    <property type="match status" value="2"/>
</dbReference>
<dbReference type="Gene3D" id="1.20.120.720">
    <property type="entry name" value="Myosin VI head, motor domain, U50 subdomain"/>
    <property type="match status" value="1"/>
</dbReference>
<dbReference type="Gene3D" id="1.10.555.10">
    <property type="entry name" value="Rho GTPase activation protein"/>
    <property type="match status" value="1"/>
</dbReference>
<dbReference type="InterPro" id="IPR046349">
    <property type="entry name" value="C1-like_sf"/>
</dbReference>
<dbReference type="InterPro" id="IPR000048">
    <property type="entry name" value="IQ_motif_EF-hand-BS"/>
</dbReference>
<dbReference type="InterPro" id="IPR036961">
    <property type="entry name" value="Kinesin_motor_dom_sf"/>
</dbReference>
<dbReference type="InterPro" id="IPR046987">
    <property type="entry name" value="Myo9"/>
</dbReference>
<dbReference type="InterPro" id="IPR001609">
    <property type="entry name" value="Myosin_head_motor_dom-like"/>
</dbReference>
<dbReference type="InterPro" id="IPR036023">
    <property type="entry name" value="MYSc_Myo9"/>
</dbReference>
<dbReference type="InterPro" id="IPR027417">
    <property type="entry name" value="P-loop_NTPase"/>
</dbReference>
<dbReference type="InterPro" id="IPR002219">
    <property type="entry name" value="PE/DAG-bd"/>
</dbReference>
<dbReference type="InterPro" id="IPR000159">
    <property type="entry name" value="RA_dom"/>
</dbReference>
<dbReference type="InterPro" id="IPR046989">
    <property type="entry name" value="RA_Myosin-IXb"/>
</dbReference>
<dbReference type="InterPro" id="IPR008936">
    <property type="entry name" value="Rho_GTPase_activation_prot"/>
</dbReference>
<dbReference type="InterPro" id="IPR000198">
    <property type="entry name" value="RhoGAP_dom"/>
</dbReference>
<dbReference type="InterPro" id="IPR028557">
    <property type="entry name" value="RhoGAP_myosin_IXB"/>
</dbReference>
<dbReference type="InterPro" id="IPR029071">
    <property type="entry name" value="Ubiquitin-like_domsf"/>
</dbReference>
<dbReference type="PANTHER" id="PTHR46184:SF2">
    <property type="entry name" value="UNCONVENTIONAL MYOSIN-IXB"/>
    <property type="match status" value="1"/>
</dbReference>
<dbReference type="PANTHER" id="PTHR46184">
    <property type="entry name" value="UNCONVENTIONAL MYOSIN-IXB-LIKE PROTEIN"/>
    <property type="match status" value="1"/>
</dbReference>
<dbReference type="Pfam" id="PF00612">
    <property type="entry name" value="IQ"/>
    <property type="match status" value="4"/>
</dbReference>
<dbReference type="Pfam" id="PF00063">
    <property type="entry name" value="Myosin_head"/>
    <property type="match status" value="2"/>
</dbReference>
<dbReference type="Pfam" id="PF00788">
    <property type="entry name" value="RA"/>
    <property type="match status" value="1"/>
</dbReference>
<dbReference type="Pfam" id="PF00620">
    <property type="entry name" value="RhoGAP"/>
    <property type="match status" value="1"/>
</dbReference>
<dbReference type="PRINTS" id="PR00193">
    <property type="entry name" value="MYOSINHEAVY"/>
</dbReference>
<dbReference type="SMART" id="SM00109">
    <property type="entry name" value="C1"/>
    <property type="match status" value="1"/>
</dbReference>
<dbReference type="SMART" id="SM00015">
    <property type="entry name" value="IQ"/>
    <property type="match status" value="4"/>
</dbReference>
<dbReference type="SMART" id="SM00242">
    <property type="entry name" value="MYSc"/>
    <property type="match status" value="1"/>
</dbReference>
<dbReference type="SMART" id="SM00314">
    <property type="entry name" value="RA"/>
    <property type="match status" value="1"/>
</dbReference>
<dbReference type="SMART" id="SM00324">
    <property type="entry name" value="RhoGAP"/>
    <property type="match status" value="1"/>
</dbReference>
<dbReference type="SUPFAM" id="SSF57889">
    <property type="entry name" value="Cysteine-rich domain"/>
    <property type="match status" value="1"/>
</dbReference>
<dbReference type="SUPFAM" id="SSF48350">
    <property type="entry name" value="GTPase activation domain, GAP"/>
    <property type="match status" value="1"/>
</dbReference>
<dbReference type="SUPFAM" id="SSF52540">
    <property type="entry name" value="P-loop containing nucleoside triphosphate hydrolases"/>
    <property type="match status" value="2"/>
</dbReference>
<dbReference type="SUPFAM" id="SSF54236">
    <property type="entry name" value="Ubiquitin-like"/>
    <property type="match status" value="1"/>
</dbReference>
<dbReference type="PROSITE" id="PS50096">
    <property type="entry name" value="IQ"/>
    <property type="match status" value="3"/>
</dbReference>
<dbReference type="PROSITE" id="PS51456">
    <property type="entry name" value="MYOSIN_MOTOR"/>
    <property type="match status" value="1"/>
</dbReference>
<dbReference type="PROSITE" id="PS50200">
    <property type="entry name" value="RA"/>
    <property type="match status" value="1"/>
</dbReference>
<dbReference type="PROSITE" id="PS50238">
    <property type="entry name" value="RHOGAP"/>
    <property type="match status" value="1"/>
</dbReference>
<dbReference type="PROSITE" id="PS00479">
    <property type="entry name" value="ZF_DAG_PE_1"/>
    <property type="match status" value="1"/>
</dbReference>
<dbReference type="PROSITE" id="PS50081">
    <property type="entry name" value="ZF_DAG_PE_2"/>
    <property type="match status" value="1"/>
</dbReference>
<evidence type="ECO:0000250" key="1">
    <source>
        <dbReference type="UniProtKB" id="Q63358"/>
    </source>
</evidence>
<evidence type="ECO:0000250" key="2">
    <source>
        <dbReference type="UniProtKB" id="Q9QY06"/>
    </source>
</evidence>
<evidence type="ECO:0000255" key="3"/>
<evidence type="ECO:0000255" key="4">
    <source>
        <dbReference type="PROSITE-ProRule" id="PRU00116"/>
    </source>
</evidence>
<evidence type="ECO:0000255" key="5">
    <source>
        <dbReference type="PROSITE-ProRule" id="PRU00166"/>
    </source>
</evidence>
<evidence type="ECO:0000255" key="6">
    <source>
        <dbReference type="PROSITE-ProRule" id="PRU00172"/>
    </source>
</evidence>
<evidence type="ECO:0000255" key="7">
    <source>
        <dbReference type="PROSITE-ProRule" id="PRU00226"/>
    </source>
</evidence>
<evidence type="ECO:0000255" key="8">
    <source>
        <dbReference type="PROSITE-ProRule" id="PRU00782"/>
    </source>
</evidence>
<evidence type="ECO:0000256" key="9">
    <source>
        <dbReference type="SAM" id="MobiDB-lite"/>
    </source>
</evidence>
<evidence type="ECO:0000269" key="10">
    <source>
    </source>
</evidence>
<evidence type="ECO:0000269" key="11">
    <source>
    </source>
</evidence>
<evidence type="ECO:0000269" key="12">
    <source>
    </source>
</evidence>
<evidence type="ECO:0000303" key="13">
    <source>
    </source>
</evidence>
<evidence type="ECO:0000305" key="14"/>
<evidence type="ECO:0007744" key="15">
    <source>
        <dbReference type="PDB" id="5C5S"/>
    </source>
</evidence>
<evidence type="ECO:0007744" key="16">
    <source>
    </source>
</evidence>
<evidence type="ECO:0007744" key="17">
    <source>
    </source>
</evidence>
<evidence type="ECO:0007744" key="18">
    <source>
    </source>
</evidence>
<evidence type="ECO:0007744" key="19">
    <source>
    </source>
</evidence>
<evidence type="ECO:0007744" key="20">
    <source>
    </source>
</evidence>
<evidence type="ECO:0007744" key="21">
    <source>
    </source>
</evidence>
<evidence type="ECO:0007744" key="22">
    <source>
    </source>
</evidence>
<evidence type="ECO:0007744" key="23">
    <source>
    </source>
</evidence>
<evidence type="ECO:0007744" key="24">
    <source>
    </source>
</evidence>
<evidence type="ECO:0007744" key="25">
    <source>
    </source>
</evidence>
<evidence type="ECO:0007744" key="26">
    <source>
    </source>
</evidence>
<evidence type="ECO:0007829" key="27">
    <source>
        <dbReference type="PDB" id="5C5S"/>
    </source>
</evidence>
<comment type="function">
    <text evidence="10 12">Myosins are actin-based motor molecules with ATPase activity. Unconventional myosins serve in intracellular movements. Binds actin with high affinity both in the absence and presence of ATP and its mechanochemical activity is inhibited by calcium ions (PubMed:9490638). Also acts as a GTPase activator for RHOA (PubMed:26529257, PubMed:9490638). Plays a role in the regulation of cell migration via its role as RHOA GTPase activator. This is regulated by its interaction with the SLIT2 receptor ROBO1; interaction with ROBO1 impairs interaction with RHOA and subsequent activation of RHOA GTPase activity, and thereby leads to increased levels of active, GTP-bound RHOA (PubMed:26529257).</text>
</comment>
<comment type="subunit">
    <text evidence="12">Interacts (via IQ domains) with CALM (PubMed:9490638). Interacts with RHOA (PubMed:26529257). Interacts (via Rho-GAP domain) with ROBO1; this inhibits the interaction with RHOA and the stimulation of RHOA GTPase activity, and thereby increases the levels of active RHOA (PubMed:26529257).</text>
</comment>
<comment type="interaction">
    <interactant intactId="EBI-6251250">
        <id>Q13459-2</id>
    </interactant>
    <interactant intactId="EBI-1044254">
        <id>Q9Y6D6</id>
        <label>ARFGEF1</label>
    </interactant>
    <organismsDiffer>false</organismsDiffer>
    <experiments>2</experiments>
</comment>
<comment type="subcellular location">
    <subcellularLocation>
        <location evidence="11">Cytoplasm</location>
        <location evidence="11">Cell cortex</location>
    </subcellularLocation>
    <subcellularLocation>
        <location evidence="11">Cytoplasm</location>
        <location evidence="11">Perinuclear region</location>
    </subcellularLocation>
    <subcellularLocation>
        <location evidence="11 12">Cytoplasm</location>
        <location evidence="11 12">Cytoskeleton</location>
    </subcellularLocation>
    <text evidence="11">In undifferentiated cells colocalizes with F-actin in the cell periphery while in differentiated cells its localization is cytoplasmic with the highest levels in the perinuclear region.</text>
</comment>
<comment type="alternative products">
    <event type="alternative splicing"/>
    <isoform>
        <id>Q13459-1</id>
        <name>Long</name>
        <sequence type="displayed"/>
    </isoform>
    <isoform>
        <id>Q13459-2</id>
        <name>Short</name>
        <sequence type="described" ref="VSP_003361 VSP_003362"/>
    </isoform>
</comment>
<comment type="tissue specificity">
    <text evidence="11 12">Detected in peripheral blood leukocytes (at protein level) (PubMed:9490638). Expressed predominantly in peripheral blood leukocytes and at lower levels, in thymus, spleen, testis, prostate, ovary, brain, small intestine and lung.</text>
</comment>
<comment type="similarity">
    <text evidence="14">Belongs to the TRAFAC class myosin-kinesin ATPase superfamily. Myosin family.</text>
</comment>
<comment type="caution">
    <text evidence="14">Represents an unconventional myosin. This protein should not be confused with the conventional myosin-9 (MYH9).</text>
</comment>
<comment type="sequence caution" evidence="14">
    <conflict type="miscellaneous discrepancy">
        <sequence resource="EMBL-CDS" id="AAC50402"/>
    </conflict>
    <text>The C-terminal sequence from position 1917 onwards appears to be not correctly spliced.</text>
</comment>
<comment type="sequence caution" evidence="14">
    <conflict type="erroneous initiation">
        <sequence resource="EMBL-CDS" id="BAA92132"/>
    </conflict>
    <text>Truncated N-terminus.</text>
</comment>
<comment type="online information" name="Wikipedia">
    <link uri="https://en.wikipedia.org/wiki/MYO9B"/>
    <text>MYO9B entry</text>
</comment>
<accession>Q13459</accession>
<accession>O75314</accession>
<accession>Q9NUJ2</accession>
<accession>Q9UHN0</accession>
<keyword id="KW-0002">3D-structure</keyword>
<keyword id="KW-0007">Acetylation</keyword>
<keyword id="KW-0009">Actin-binding</keyword>
<keyword id="KW-0025">Alternative splicing</keyword>
<keyword id="KW-0067">ATP-binding</keyword>
<keyword id="KW-0112">Calmodulin-binding</keyword>
<keyword id="KW-0175">Coiled coil</keyword>
<keyword id="KW-0963">Cytoplasm</keyword>
<keyword id="KW-0206">Cytoskeleton</keyword>
<keyword id="KW-0343">GTPase activation</keyword>
<keyword id="KW-0479">Metal-binding</keyword>
<keyword id="KW-0505">Motor protein</keyword>
<keyword id="KW-0518">Myosin</keyword>
<keyword id="KW-0547">Nucleotide-binding</keyword>
<keyword id="KW-0597">Phosphoprotein</keyword>
<keyword id="KW-1267">Proteomics identification</keyword>
<keyword id="KW-1185">Reference proteome</keyword>
<keyword id="KW-0677">Repeat</keyword>
<keyword id="KW-0862">Zinc</keyword>
<keyword id="KW-0863">Zinc-finger</keyword>